<reference key="1">
    <citation type="journal article" date="2001" name="Science">
        <title>Mechanisms of evolution in Rickettsia conorii and R. prowazekii.</title>
        <authorList>
            <person name="Ogata H."/>
            <person name="Audic S."/>
            <person name="Renesto-Audiffren P."/>
            <person name="Fournier P.-E."/>
            <person name="Barbe V."/>
            <person name="Samson D."/>
            <person name="Roux V."/>
            <person name="Cossart P."/>
            <person name="Weissenbach J."/>
            <person name="Claverie J.-M."/>
            <person name="Raoult D."/>
        </authorList>
    </citation>
    <scope>NUCLEOTIDE SEQUENCE [LARGE SCALE GENOMIC DNA]</scope>
    <source>
        <strain>ATCC VR-613 / Malish 7</strain>
    </source>
</reference>
<evidence type="ECO:0000255" key="1">
    <source>
        <dbReference type="HAMAP-Rule" id="MF_00514"/>
    </source>
</evidence>
<evidence type="ECO:0000305" key="2"/>
<keyword id="KW-0687">Ribonucleoprotein</keyword>
<keyword id="KW-0689">Ribosomal protein</keyword>
<name>RL35_RICCN</name>
<feature type="chain" id="PRO_0000177411" description="Large ribosomal subunit protein bL35">
    <location>
        <begin position="1"/>
        <end position="68"/>
    </location>
</feature>
<sequence length="68" mass="7897">MPKLKTKSAVKKRFKLTASGKVIASQAGKKHFMRRRTKAQIRNLRGTTILCPQDRYNIKKYFLPYGIN</sequence>
<accession>Q92H38</accession>
<organism>
    <name type="scientific">Rickettsia conorii (strain ATCC VR-613 / Malish 7)</name>
    <dbReference type="NCBI Taxonomy" id="272944"/>
    <lineage>
        <taxon>Bacteria</taxon>
        <taxon>Pseudomonadati</taxon>
        <taxon>Pseudomonadota</taxon>
        <taxon>Alphaproteobacteria</taxon>
        <taxon>Rickettsiales</taxon>
        <taxon>Rickettsiaceae</taxon>
        <taxon>Rickettsieae</taxon>
        <taxon>Rickettsia</taxon>
        <taxon>spotted fever group</taxon>
    </lineage>
</organism>
<gene>
    <name evidence="1" type="primary">rpmI</name>
    <name type="ordered locus">RC0934</name>
</gene>
<comment type="similarity">
    <text evidence="1">Belongs to the bacterial ribosomal protein bL35 family.</text>
</comment>
<comment type="sequence caution" evidence="2">
    <conflict type="erroneous initiation">
        <sequence resource="EMBL-CDS" id="AAL03472"/>
    </conflict>
</comment>
<dbReference type="EMBL" id="AE006914">
    <property type="protein sequence ID" value="AAL03472.1"/>
    <property type="status" value="ALT_INIT"/>
    <property type="molecule type" value="Genomic_DNA"/>
</dbReference>
<dbReference type="PIR" id="F97816">
    <property type="entry name" value="F97816"/>
</dbReference>
<dbReference type="RefSeq" id="WP_010977532.1">
    <property type="nucleotide sequence ID" value="NC_003103.1"/>
</dbReference>
<dbReference type="SMR" id="Q92H38"/>
<dbReference type="GeneID" id="928035"/>
<dbReference type="KEGG" id="rco:RC0934"/>
<dbReference type="PATRIC" id="fig|272944.4.peg.1064"/>
<dbReference type="HOGENOM" id="CLU_169643_2_1_5"/>
<dbReference type="Proteomes" id="UP000000816">
    <property type="component" value="Chromosome"/>
</dbReference>
<dbReference type="GO" id="GO:0022625">
    <property type="term" value="C:cytosolic large ribosomal subunit"/>
    <property type="evidence" value="ECO:0007669"/>
    <property type="project" value="TreeGrafter"/>
</dbReference>
<dbReference type="GO" id="GO:0003735">
    <property type="term" value="F:structural constituent of ribosome"/>
    <property type="evidence" value="ECO:0007669"/>
    <property type="project" value="InterPro"/>
</dbReference>
<dbReference type="GO" id="GO:0006412">
    <property type="term" value="P:translation"/>
    <property type="evidence" value="ECO:0007669"/>
    <property type="project" value="UniProtKB-UniRule"/>
</dbReference>
<dbReference type="FunFam" id="4.10.410.60:FF:000001">
    <property type="entry name" value="50S ribosomal protein L35"/>
    <property type="match status" value="1"/>
</dbReference>
<dbReference type="Gene3D" id="4.10.410.60">
    <property type="match status" value="1"/>
</dbReference>
<dbReference type="HAMAP" id="MF_00514">
    <property type="entry name" value="Ribosomal_bL35"/>
    <property type="match status" value="1"/>
</dbReference>
<dbReference type="InterPro" id="IPR001706">
    <property type="entry name" value="Ribosomal_bL35"/>
</dbReference>
<dbReference type="InterPro" id="IPR021137">
    <property type="entry name" value="Ribosomal_bL35-like"/>
</dbReference>
<dbReference type="InterPro" id="IPR018265">
    <property type="entry name" value="Ribosomal_bL35_CS"/>
</dbReference>
<dbReference type="InterPro" id="IPR037229">
    <property type="entry name" value="Ribosomal_bL35_sf"/>
</dbReference>
<dbReference type="NCBIfam" id="TIGR00001">
    <property type="entry name" value="rpmI_bact"/>
    <property type="match status" value="1"/>
</dbReference>
<dbReference type="PANTHER" id="PTHR33343">
    <property type="entry name" value="54S RIBOSOMAL PROTEIN BL35M"/>
    <property type="match status" value="1"/>
</dbReference>
<dbReference type="PANTHER" id="PTHR33343:SF1">
    <property type="entry name" value="LARGE RIBOSOMAL SUBUNIT PROTEIN BL35M"/>
    <property type="match status" value="1"/>
</dbReference>
<dbReference type="Pfam" id="PF01632">
    <property type="entry name" value="Ribosomal_L35p"/>
    <property type="match status" value="1"/>
</dbReference>
<dbReference type="PRINTS" id="PR00064">
    <property type="entry name" value="RIBOSOMALL35"/>
</dbReference>
<dbReference type="SUPFAM" id="SSF143034">
    <property type="entry name" value="L35p-like"/>
    <property type="match status" value="1"/>
</dbReference>
<dbReference type="PROSITE" id="PS00936">
    <property type="entry name" value="RIBOSOMAL_L35"/>
    <property type="match status" value="1"/>
</dbReference>
<protein>
    <recommendedName>
        <fullName evidence="1">Large ribosomal subunit protein bL35</fullName>
    </recommendedName>
    <alternativeName>
        <fullName evidence="2">50S ribosomal protein L35</fullName>
    </alternativeName>
</protein>
<proteinExistence type="inferred from homology"/>